<name>MESP2_MOUSE</name>
<gene>
    <name type="primary">Mesp2</name>
</gene>
<protein>
    <recommendedName>
        <fullName>Mesoderm posterior protein 2</fullName>
    </recommendedName>
</protein>
<sequence length="370" mass="39789">MAQSSPPQSLQGLVPLGLLPGLGLGSAIGLHVSGLVLRFVRFLPFYATRRPSQPAGPARSTRTTQATAPRRTRPAPAGGQRQSASEREKLRMRTLARALQELRRFLPPSVAPAGQSLTKIETLRLAIRYIGHLSALLGLSEDSLRRRRRRSADAAFSHRCPQCPDGGSPSQAQMLGPSLGSAMSSGVSWGCPPACPGPLISPENLGNRISNVDPRVTPPYCPQIQSPLHQSLERAADSSPWAPPQACPGMQMSPEPRNKTGHWTQSTEPAELTKVYQSLSVSPEPRLSLGSPLLLPRPSCQRLQPQPQPQPQWGCWGHDAEVLSTSEDQGSSPALQLPVASPTPSSGLQLSGCPELWQEDLEGPPLNIFY</sequence>
<keyword id="KW-0217">Developmental protein</keyword>
<keyword id="KW-0238">DNA-binding</keyword>
<keyword id="KW-0914">Notch signaling pathway</keyword>
<keyword id="KW-0539">Nucleus</keyword>
<keyword id="KW-0597">Phosphoprotein</keyword>
<keyword id="KW-1185">Reference proteome</keyword>
<keyword id="KW-0804">Transcription</keyword>
<keyword id="KW-0805">Transcription regulation</keyword>
<accession>O08574</accession>
<accession>Q3UIV5</accession>
<evidence type="ECO:0000255" key="1">
    <source>
        <dbReference type="PROSITE-ProRule" id="PRU00981"/>
    </source>
</evidence>
<evidence type="ECO:0000256" key="2">
    <source>
        <dbReference type="SAM" id="MobiDB-lite"/>
    </source>
</evidence>
<evidence type="ECO:0000269" key="3">
    <source>
    </source>
</evidence>
<evidence type="ECO:0000269" key="4">
    <source>
    </source>
</evidence>
<evidence type="ECO:0000269" key="5">
    <source>
    </source>
</evidence>
<evidence type="ECO:0000269" key="6">
    <source>
    </source>
</evidence>
<evidence type="ECO:0000269" key="7">
    <source>
    </source>
</evidence>
<evidence type="ECO:0000269" key="8">
    <source>
    </source>
</evidence>
<evidence type="ECO:0000269" key="9">
    <source>
    </source>
</evidence>
<evidence type="ECO:0000269" key="10">
    <source>
    </source>
</evidence>
<evidence type="ECO:0000269" key="11">
    <source>
    </source>
</evidence>
<evidence type="ECO:0000269" key="12">
    <source>
    </source>
</evidence>
<evidence type="ECO:0000269" key="13">
    <source>
    </source>
</evidence>
<evidence type="ECO:0000269" key="14">
    <source>
    </source>
</evidence>
<evidence type="ECO:0000269" key="15">
    <source>
    </source>
</evidence>
<evidence type="ECO:0000269" key="16">
    <source>
    </source>
</evidence>
<evidence type="ECO:0000269" key="17">
    <source>
    </source>
</evidence>
<evidence type="ECO:0000305" key="18"/>
<proteinExistence type="evidence at protein level"/>
<dbReference type="EMBL" id="U71125">
    <property type="protein sequence ID" value="AAB51199.1"/>
    <property type="molecule type" value="mRNA"/>
</dbReference>
<dbReference type="EMBL" id="AK146740">
    <property type="protein sequence ID" value="BAE27401.1"/>
    <property type="molecule type" value="mRNA"/>
</dbReference>
<dbReference type="RefSeq" id="NP_032615.2">
    <property type="nucleotide sequence ID" value="NM_008589.2"/>
</dbReference>
<dbReference type="SMR" id="O08574"/>
<dbReference type="FunCoup" id="O08574">
    <property type="interactions" value="451"/>
</dbReference>
<dbReference type="GlyGen" id="O08574">
    <property type="glycosylation" value="1 site"/>
</dbReference>
<dbReference type="iPTMnet" id="O08574"/>
<dbReference type="PhosphoSitePlus" id="O08574"/>
<dbReference type="DNASU" id="17293"/>
<dbReference type="GeneID" id="17293"/>
<dbReference type="KEGG" id="mmu:17293"/>
<dbReference type="AGR" id="MGI:1096325"/>
<dbReference type="CTD" id="145873"/>
<dbReference type="MGI" id="MGI:1096325">
    <property type="gene designation" value="Mesp2"/>
</dbReference>
<dbReference type="eggNOG" id="KOG4029">
    <property type="taxonomic scope" value="Eukaryota"/>
</dbReference>
<dbReference type="InParanoid" id="O08574"/>
<dbReference type="OrthoDB" id="9946827at2759"/>
<dbReference type="PhylomeDB" id="O08574"/>
<dbReference type="BioGRID-ORCS" id="17293">
    <property type="hits" value="1 hit in 78 CRISPR screens"/>
</dbReference>
<dbReference type="PRO" id="PR:O08574"/>
<dbReference type="Proteomes" id="UP000000589">
    <property type="component" value="Unplaced"/>
</dbReference>
<dbReference type="RNAct" id="O08574">
    <property type="molecule type" value="protein"/>
</dbReference>
<dbReference type="GO" id="GO:0005654">
    <property type="term" value="C:nucleoplasm"/>
    <property type="evidence" value="ECO:0000304"/>
    <property type="project" value="Reactome"/>
</dbReference>
<dbReference type="GO" id="GO:0005634">
    <property type="term" value="C:nucleus"/>
    <property type="evidence" value="ECO:0000314"/>
    <property type="project" value="MGI"/>
</dbReference>
<dbReference type="GO" id="GO:0001228">
    <property type="term" value="F:DNA-binding transcription activator activity, RNA polymerase II-specific"/>
    <property type="evidence" value="ECO:0000314"/>
    <property type="project" value="NTNU_SB"/>
</dbReference>
<dbReference type="GO" id="GO:0003700">
    <property type="term" value="F:DNA-binding transcription factor activity"/>
    <property type="evidence" value="ECO:0000314"/>
    <property type="project" value="MGI"/>
</dbReference>
<dbReference type="GO" id="GO:0046983">
    <property type="term" value="F:protein dimerization activity"/>
    <property type="evidence" value="ECO:0007669"/>
    <property type="project" value="InterPro"/>
</dbReference>
<dbReference type="GO" id="GO:0000978">
    <property type="term" value="F:RNA polymerase II cis-regulatory region sequence-specific DNA binding"/>
    <property type="evidence" value="ECO:0000314"/>
    <property type="project" value="NTNU_SB"/>
</dbReference>
<dbReference type="GO" id="GO:0008078">
    <property type="term" value="P:mesodermal cell migration"/>
    <property type="evidence" value="ECO:0000316"/>
    <property type="project" value="MGI"/>
</dbReference>
<dbReference type="GO" id="GO:0007219">
    <property type="term" value="P:Notch signaling pathway"/>
    <property type="evidence" value="ECO:0000315"/>
    <property type="project" value="MGI"/>
</dbReference>
<dbReference type="GO" id="GO:0045944">
    <property type="term" value="P:positive regulation of transcription by RNA polymerase II"/>
    <property type="evidence" value="ECO:0000314"/>
    <property type="project" value="NTNU_SB"/>
</dbReference>
<dbReference type="GO" id="GO:0023019">
    <property type="term" value="P:signal transduction involved in regulation of gene expression"/>
    <property type="evidence" value="ECO:0000314"/>
    <property type="project" value="MGI"/>
</dbReference>
<dbReference type="GO" id="GO:0032525">
    <property type="term" value="P:somite rostral/caudal axis specification"/>
    <property type="evidence" value="ECO:0000315"/>
    <property type="project" value="MGI"/>
</dbReference>
<dbReference type="GO" id="GO:0001756">
    <property type="term" value="P:somitogenesis"/>
    <property type="evidence" value="ECO:0000315"/>
    <property type="project" value="MGI"/>
</dbReference>
<dbReference type="CDD" id="cd18938">
    <property type="entry name" value="bHLH_TS_Mesp"/>
    <property type="match status" value="1"/>
</dbReference>
<dbReference type="FunFam" id="4.10.280.10:FF:000047">
    <property type="entry name" value="mesoderm posterior protein 1"/>
    <property type="match status" value="1"/>
</dbReference>
<dbReference type="Gene3D" id="4.10.280.10">
    <property type="entry name" value="Helix-loop-helix DNA-binding domain"/>
    <property type="match status" value="1"/>
</dbReference>
<dbReference type="InterPro" id="IPR011598">
    <property type="entry name" value="bHLH_dom"/>
</dbReference>
<dbReference type="InterPro" id="IPR036638">
    <property type="entry name" value="HLH_DNA-bd_sf"/>
</dbReference>
<dbReference type="InterPro" id="IPR040259">
    <property type="entry name" value="Mesogenin/MesP"/>
</dbReference>
<dbReference type="PANTHER" id="PTHR20937">
    <property type="entry name" value="IP14615P"/>
    <property type="match status" value="1"/>
</dbReference>
<dbReference type="PANTHER" id="PTHR20937:SF17">
    <property type="entry name" value="MESODERM POSTERIOR PROTEIN 2"/>
    <property type="match status" value="1"/>
</dbReference>
<dbReference type="Pfam" id="PF00010">
    <property type="entry name" value="HLH"/>
    <property type="match status" value="1"/>
</dbReference>
<dbReference type="SMART" id="SM00353">
    <property type="entry name" value="HLH"/>
    <property type="match status" value="1"/>
</dbReference>
<dbReference type="SUPFAM" id="SSF47459">
    <property type="entry name" value="HLH, helix-loop-helix DNA-binding domain"/>
    <property type="match status" value="1"/>
</dbReference>
<dbReference type="PROSITE" id="PS50888">
    <property type="entry name" value="BHLH"/>
    <property type="match status" value="1"/>
</dbReference>
<organism>
    <name type="scientific">Mus musculus</name>
    <name type="common">Mouse</name>
    <dbReference type="NCBI Taxonomy" id="10090"/>
    <lineage>
        <taxon>Eukaryota</taxon>
        <taxon>Metazoa</taxon>
        <taxon>Chordata</taxon>
        <taxon>Craniata</taxon>
        <taxon>Vertebrata</taxon>
        <taxon>Euteleostomi</taxon>
        <taxon>Mammalia</taxon>
        <taxon>Eutheria</taxon>
        <taxon>Euarchontoglires</taxon>
        <taxon>Glires</taxon>
        <taxon>Rodentia</taxon>
        <taxon>Myomorpha</taxon>
        <taxon>Muroidea</taxon>
        <taxon>Muridae</taxon>
        <taxon>Murinae</taxon>
        <taxon>Mus</taxon>
        <taxon>Mus</taxon>
    </lineage>
</organism>
<reference key="1">
    <citation type="journal article" date="1997" name="Genes Dev.">
        <title>Mesp2: a novel mouse gene expressed in the presegmented mesoderm and essential for segmentation initiation.</title>
        <authorList>
            <person name="Saga Y."/>
            <person name="Hata N."/>
            <person name="Koseki H."/>
            <person name="Taketo M.M."/>
        </authorList>
    </citation>
    <scope>NUCLEOTIDE SEQUENCE [MRNA]</scope>
    <scope>FUNCTION</scope>
    <scope>DEVELOPMENTAL STAGE</scope>
    <scope>INDUCTION</scope>
    <scope>DISRUPTION PHENOTYPE</scope>
    <source>
        <strain>ICR</strain>
    </source>
</reference>
<reference key="2">
    <citation type="journal article" date="2005" name="Science">
        <title>The transcriptional landscape of the mammalian genome.</title>
        <authorList>
            <person name="Carninci P."/>
            <person name="Kasukawa T."/>
            <person name="Katayama S."/>
            <person name="Gough J."/>
            <person name="Frith M.C."/>
            <person name="Maeda N."/>
            <person name="Oyama R."/>
            <person name="Ravasi T."/>
            <person name="Lenhard B."/>
            <person name="Wells C."/>
            <person name="Kodzius R."/>
            <person name="Shimokawa K."/>
            <person name="Bajic V.B."/>
            <person name="Brenner S.E."/>
            <person name="Batalov S."/>
            <person name="Forrest A.R."/>
            <person name="Zavolan M."/>
            <person name="Davis M.J."/>
            <person name="Wilming L.G."/>
            <person name="Aidinis V."/>
            <person name="Allen J.E."/>
            <person name="Ambesi-Impiombato A."/>
            <person name="Apweiler R."/>
            <person name="Aturaliya R.N."/>
            <person name="Bailey T.L."/>
            <person name="Bansal M."/>
            <person name="Baxter L."/>
            <person name="Beisel K.W."/>
            <person name="Bersano T."/>
            <person name="Bono H."/>
            <person name="Chalk A.M."/>
            <person name="Chiu K.P."/>
            <person name="Choudhary V."/>
            <person name="Christoffels A."/>
            <person name="Clutterbuck D.R."/>
            <person name="Crowe M.L."/>
            <person name="Dalla E."/>
            <person name="Dalrymple B.P."/>
            <person name="de Bono B."/>
            <person name="Della Gatta G."/>
            <person name="di Bernardo D."/>
            <person name="Down T."/>
            <person name="Engstrom P."/>
            <person name="Fagiolini M."/>
            <person name="Faulkner G."/>
            <person name="Fletcher C.F."/>
            <person name="Fukushima T."/>
            <person name="Furuno M."/>
            <person name="Futaki S."/>
            <person name="Gariboldi M."/>
            <person name="Georgii-Hemming P."/>
            <person name="Gingeras T.R."/>
            <person name="Gojobori T."/>
            <person name="Green R.E."/>
            <person name="Gustincich S."/>
            <person name="Harbers M."/>
            <person name="Hayashi Y."/>
            <person name="Hensch T.K."/>
            <person name="Hirokawa N."/>
            <person name="Hill D."/>
            <person name="Huminiecki L."/>
            <person name="Iacono M."/>
            <person name="Ikeo K."/>
            <person name="Iwama A."/>
            <person name="Ishikawa T."/>
            <person name="Jakt M."/>
            <person name="Kanapin A."/>
            <person name="Katoh M."/>
            <person name="Kawasawa Y."/>
            <person name="Kelso J."/>
            <person name="Kitamura H."/>
            <person name="Kitano H."/>
            <person name="Kollias G."/>
            <person name="Krishnan S.P."/>
            <person name="Kruger A."/>
            <person name="Kummerfeld S.K."/>
            <person name="Kurochkin I.V."/>
            <person name="Lareau L.F."/>
            <person name="Lazarevic D."/>
            <person name="Lipovich L."/>
            <person name="Liu J."/>
            <person name="Liuni S."/>
            <person name="McWilliam S."/>
            <person name="Madan Babu M."/>
            <person name="Madera M."/>
            <person name="Marchionni L."/>
            <person name="Matsuda H."/>
            <person name="Matsuzawa S."/>
            <person name="Miki H."/>
            <person name="Mignone F."/>
            <person name="Miyake S."/>
            <person name="Morris K."/>
            <person name="Mottagui-Tabar S."/>
            <person name="Mulder N."/>
            <person name="Nakano N."/>
            <person name="Nakauchi H."/>
            <person name="Ng P."/>
            <person name="Nilsson R."/>
            <person name="Nishiguchi S."/>
            <person name="Nishikawa S."/>
            <person name="Nori F."/>
            <person name="Ohara O."/>
            <person name="Okazaki Y."/>
            <person name="Orlando V."/>
            <person name="Pang K.C."/>
            <person name="Pavan W.J."/>
            <person name="Pavesi G."/>
            <person name="Pesole G."/>
            <person name="Petrovsky N."/>
            <person name="Piazza S."/>
            <person name="Reed J."/>
            <person name="Reid J.F."/>
            <person name="Ring B.Z."/>
            <person name="Ringwald M."/>
            <person name="Rost B."/>
            <person name="Ruan Y."/>
            <person name="Salzberg S.L."/>
            <person name="Sandelin A."/>
            <person name="Schneider C."/>
            <person name="Schoenbach C."/>
            <person name="Sekiguchi K."/>
            <person name="Semple C.A."/>
            <person name="Seno S."/>
            <person name="Sessa L."/>
            <person name="Sheng Y."/>
            <person name="Shibata Y."/>
            <person name="Shimada H."/>
            <person name="Shimada K."/>
            <person name="Silva D."/>
            <person name="Sinclair B."/>
            <person name="Sperling S."/>
            <person name="Stupka E."/>
            <person name="Sugiura K."/>
            <person name="Sultana R."/>
            <person name="Takenaka Y."/>
            <person name="Taki K."/>
            <person name="Tammoja K."/>
            <person name="Tan S.L."/>
            <person name="Tang S."/>
            <person name="Taylor M.S."/>
            <person name="Tegner J."/>
            <person name="Teichmann S.A."/>
            <person name="Ueda H.R."/>
            <person name="van Nimwegen E."/>
            <person name="Verardo R."/>
            <person name="Wei C.L."/>
            <person name="Yagi K."/>
            <person name="Yamanishi H."/>
            <person name="Zabarovsky E."/>
            <person name="Zhu S."/>
            <person name="Zimmer A."/>
            <person name="Hide W."/>
            <person name="Bult C."/>
            <person name="Grimmond S.M."/>
            <person name="Teasdale R.D."/>
            <person name="Liu E.T."/>
            <person name="Brusic V."/>
            <person name="Quackenbush J."/>
            <person name="Wahlestedt C."/>
            <person name="Mattick J.S."/>
            <person name="Hume D.A."/>
            <person name="Kai C."/>
            <person name="Sasaki D."/>
            <person name="Tomaru Y."/>
            <person name="Fukuda S."/>
            <person name="Kanamori-Katayama M."/>
            <person name="Suzuki M."/>
            <person name="Aoki J."/>
            <person name="Arakawa T."/>
            <person name="Iida J."/>
            <person name="Imamura K."/>
            <person name="Itoh M."/>
            <person name="Kato T."/>
            <person name="Kawaji H."/>
            <person name="Kawagashira N."/>
            <person name="Kawashima T."/>
            <person name="Kojima M."/>
            <person name="Kondo S."/>
            <person name="Konno H."/>
            <person name="Nakano K."/>
            <person name="Ninomiya N."/>
            <person name="Nishio T."/>
            <person name="Okada M."/>
            <person name="Plessy C."/>
            <person name="Shibata K."/>
            <person name="Shiraki T."/>
            <person name="Suzuki S."/>
            <person name="Tagami M."/>
            <person name="Waki K."/>
            <person name="Watahiki A."/>
            <person name="Okamura-Oho Y."/>
            <person name="Suzuki H."/>
            <person name="Kawai J."/>
            <person name="Hayashizaki Y."/>
        </authorList>
    </citation>
    <scope>NUCLEOTIDE SEQUENCE [LARGE SCALE MRNA] OF 107-370</scope>
    <source>
        <strain>C57BL/6J</strain>
        <tissue>Liver</tissue>
    </source>
</reference>
<reference key="3">
    <citation type="journal article" date="1999" name="Curr. Biol.">
        <title>Interaction between Notch signalling and Lunatic fringe during somite boundary formation in the mouse.</title>
        <authorList>
            <person name="del Barco Barrantes I."/>
            <person name="Elia A.J."/>
            <person name="Wuensch K."/>
            <person name="De Angelis M.H."/>
            <person name="Mak T.W."/>
            <person name="Rossant J."/>
            <person name="Conlon R.A."/>
            <person name="Gossler A."/>
            <person name="de la Pompa J.L."/>
        </authorList>
    </citation>
    <scope>INDUCTION</scope>
</reference>
<reference key="4">
    <citation type="journal article" date="2000" name="Development">
        <title>MesP1 and MesP2 are essential for the development of cardiac mesoderm.</title>
        <authorList>
            <person name="Kitajima S."/>
            <person name="Takagi A."/>
            <person name="Inoue T."/>
            <person name="Saga Y."/>
        </authorList>
    </citation>
    <scope>FUNCTION IN DEVELOPMENT OF CARDIAC MESODERM</scope>
    <scope>DEVELOPMENTAL STAGE</scope>
    <scope>DISRUPTION PHENOTYPE</scope>
</reference>
<reference key="5">
    <citation type="journal article" date="2000" name="Nat. Genet.">
        <title>Mesp2 initiates somite segmentation through the Notch signalling pathway.</title>
        <authorList>
            <person name="Takahashi Y."/>
            <person name="Koizumi K."/>
            <person name="Takagi A."/>
            <person name="Kitajima S."/>
            <person name="Inoue T."/>
            <person name="Koseki H."/>
            <person name="Saga Y."/>
        </authorList>
    </citation>
    <scope>FUNCTION</scope>
    <scope>DEVELOPMENTAL STAGE</scope>
</reference>
<reference key="6">
    <citation type="journal article" date="2001" name="Genes Dev.">
        <title>The murine winged helix transcription factors, Foxc1 and Foxc2, are both required for cardiovascular development and somitogenesis.</title>
        <authorList>
            <person name="Kume T."/>
            <person name="Jiang H."/>
            <person name="Topczewska J.M."/>
            <person name="Hogan B.L."/>
        </authorList>
    </citation>
    <scope>INDUCTION</scope>
</reference>
<reference key="7">
    <citation type="journal article" date="2003" name="Development">
        <title>Feedback loops comprising Dll1, Dll3 and Mesp2, and differential involvement of Psen1 are essential for rostrocaudal patterning of somites.</title>
        <authorList>
            <person name="Takahashi Y."/>
            <person name="Inoue T."/>
            <person name="Gossler A."/>
            <person name="Saga Y."/>
        </authorList>
    </citation>
    <scope>FUNCTION</scope>
</reference>
<reference key="8">
    <citation type="journal article" date="2003" name="Dev. Biol.">
        <title>The protocadherin papc is involved in the organization of the epithelium along the segmental border during mouse somitogenesis.</title>
        <authorList>
            <person name="Rhee J."/>
            <person name="Takahashi Y."/>
            <person name="Saga Y."/>
            <person name="Wilson-Rawls J."/>
            <person name="Rawls A."/>
        </authorList>
    </citation>
    <scope>FUNCTION</scope>
</reference>
<reference key="9">
    <citation type="journal article" date="2005" name="Development">
        <title>Differential contributions of Mesp1 and Mesp2 to the epithelialization and rostro-caudal patterning of somites.</title>
        <authorList>
            <person name="Takahashi Y."/>
            <person name="Kitajima S."/>
            <person name="Inoue T."/>
            <person name="Kanno J."/>
            <person name="Saga Y."/>
        </authorList>
    </citation>
    <scope>FUNCTION</scope>
</reference>
<reference key="10">
    <citation type="journal article" date="2005" name="Nature">
        <title>The Mesp2 transcription factor establishes segmental borders by suppressing Notch activity.</title>
        <authorList>
            <person name="Morimoto M."/>
            <person name="Takahashi Y."/>
            <person name="Endo M."/>
            <person name="Saga Y."/>
        </authorList>
    </citation>
    <scope>FUNCTION</scope>
    <scope>SUBCELLULAR LOCATION</scope>
    <scope>DEVELOPMENTAL STAGE</scope>
</reference>
<reference key="11">
    <citation type="journal article" date="2006" name="Development">
        <title>Identification of Epha4 enhancer required for segmental expression and the regulation by Mesp2.</title>
        <authorList>
            <person name="Nakajima Y."/>
            <person name="Morimoto M."/>
            <person name="Takahashi Y."/>
            <person name="Koseki H."/>
            <person name="Saga Y."/>
        </authorList>
    </citation>
    <scope>FUNCTION</scope>
    <scope>DNA-BINDING</scope>
</reference>
<reference key="12">
    <citation type="journal article" date="2006" name="Dev. Biol.">
        <title>Cooperative Mesp activity is required for normal somitogenesis along the anterior-posterior axis.</title>
        <authorList>
            <person name="Morimoto M."/>
            <person name="Kiso M."/>
            <person name="Sasaki N."/>
            <person name="Saga Y."/>
        </authorList>
    </citation>
    <scope>SUBCELLULAR LOCATION</scope>
    <scope>DEGRADATION</scope>
    <scope>PHOSPHORYLATION</scope>
    <scope>MUTAGENESIS OF 70-ARG--ARG-73 AND 145-ARG--ARG-150</scope>
</reference>
<reference key="13">
    <citation type="journal article" date="2006" name="Proc. Natl. Acad. Sci. U.S.A.">
        <title>Tbx6-mediated Notch signaling controls somite-specific Mesp2 expression.</title>
        <authorList>
            <person name="Yasuhiko Y."/>
            <person name="Haraguchi S."/>
            <person name="Kitajima S."/>
            <person name="Takahashi Y."/>
            <person name="Kanno J."/>
            <person name="Saga Y."/>
        </authorList>
    </citation>
    <scope>INDUCTION BY TBX6 AND NOTCH SIGNALING</scope>
</reference>
<reference key="14">
    <citation type="journal article" date="2007" name="Development">
        <title>The negative regulation of Mesp2 by mouse Ripply2 is required to establish the rostro-caudal patterning within a somite.</title>
        <authorList>
            <person name="Morimoto M."/>
            <person name="Sasaki N."/>
            <person name="Oginuma M."/>
            <person name="Kiso M."/>
            <person name="Igarashi K."/>
            <person name="Aizaki K."/>
            <person name="Kanno J."/>
            <person name="Saga Y."/>
        </authorList>
    </citation>
    <scope>DNA-BINDING</scope>
    <scope>INDUCTION BY RIPPLY2</scope>
</reference>
<reference key="15">
    <citation type="journal article" date="2007" name="Dev. Biol.">
        <title>Appropriate suppression of Notch signaling by Mesp factors is essential for stripe pattern formation leading to segment boundary formation.</title>
        <authorList>
            <person name="Takahashi Y."/>
            <person name="Yasuhiko Y."/>
            <person name="Kitajima S."/>
            <person name="Kanno J."/>
            <person name="Saga Y."/>
        </authorList>
    </citation>
    <scope>FUNCTION</scope>
    <scope>DISRUPTION PHENOTYPE</scope>
</reference>
<reference key="16">
    <citation type="journal article" date="2007" name="Dev. Dyn.">
        <title>Transcription factors Mesp2 and Paraxis have critical roles in axial musculoskeletal formation.</title>
        <authorList>
            <person name="Takahashi Y."/>
            <person name="Takagi A."/>
            <person name="Hiraoka S."/>
            <person name="Koseki H."/>
            <person name="Kanno J."/>
            <person name="Rawls A."/>
            <person name="Saga Y."/>
        </authorList>
    </citation>
    <scope>FUNCTION</scope>
</reference>
<comment type="function">
    <text evidence="4 5 7 8 9 10 12 14 16 17">Transcription factor with important role in somitogenesis. Defines the rostrocaudal patterning of the somite by participating in distinct Notch pathways. Also regulates the FGF signaling pathway. Specifies the rostral half of the somites. Generates rostro-caudal polarity of somites by down-regulating in the presumptive rostral domain DLL1, a Notch ligand. Participates in the segment border formation by activating in the anterior presomitic mesoderm LFNG, a negative regulator of DLL1-Notch signaling. Acts as a strong suppressor of Notch activity. Together with MESP1 is involved in the epithelialization of somitic mesoderm and in the development of cardiac mesoderm. May play a role with Tcf15 in the differentiation of myotomal and sclerotomal cells by regulating Pax family genes. Also controls the expression of the protocadherin PCDH8/PAPC, EPHA4, RIPPLY2, NOTCH2, FGFR1, and CER1. Binds to the E-boxes within the EPH4A and RIPPLY2 enhancers.</text>
</comment>
<comment type="subcellular location">
    <subcellularLocation>
        <location evidence="1 10 13">Nucleus</location>
    </subcellularLocation>
</comment>
<comment type="developmental stage">
    <text evidence="4 5 10 17">First transiently detected in the nascent mesoderm at the onset of gastrulation. A second site of expression is detected at 8 dpc in the rostral region of the presomitic mesoderm inmediately before segmentation. Down-regulated immediately after the formation of the segmented somites before 13.5 dpc. Initially expressed throughout the length of one somite, and then quickly repressed in the presumptive caudal region. Mesp2 is involved in the rapid down-regulation of its own expression in the presumptive caudal half of the somite.</text>
</comment>
<comment type="induction">
    <text evidence="3 6 11 15 17">Down-regulated in NOTCH1, DLL1, RBPJ and FOXC1/FOXC2 mutant mice. Expression in the anterior presomitic mesoderm is periodic, dissipating once the segmental border is established. Negatively regulated by RIPPLY2. Positively regulated by TBX6 and Notch signaling.</text>
</comment>
<comment type="PTM">
    <text>Degraded by the proteasome.</text>
</comment>
<comment type="PTM">
    <text evidence="13">Phosphorylated.</text>
</comment>
<comment type="disruption phenotype">
    <text evidence="4 14 17">Mice die shortly after birth and show caudal truncation and severe skeletal malformations. Lack of segmentation and impaired segment polarity of the paraxial mesoderm are the primary defects. Mutants show altered expression of MEOX1, Pax1, and DLL1 and lack of expression of Notch1, Notch2, and FGFR1. Mice lacking Mesp1 and Mesp2 die around 9.5 dpc. The major defect is the apparent lack of any mesodermal layer between endoderm and ectoderm and a defect in the migratory activity of mesodermal cells.</text>
</comment>
<feature type="chain" id="PRO_0000296302" description="Mesoderm posterior protein 2">
    <location>
        <begin position="1"/>
        <end position="370"/>
    </location>
</feature>
<feature type="domain" description="bHLH" evidence="1">
    <location>
        <begin position="79"/>
        <end position="133"/>
    </location>
</feature>
<feature type="region of interest" description="Disordered" evidence="2">
    <location>
        <begin position="51"/>
        <end position="89"/>
    </location>
</feature>
<feature type="region of interest" description="Disordered" evidence="2">
    <location>
        <begin position="231"/>
        <end position="265"/>
    </location>
</feature>
<feature type="region of interest" description="Disordered" evidence="2">
    <location>
        <begin position="325"/>
        <end position="350"/>
    </location>
</feature>
<feature type="region of interest" description="May contain a degradation domain">
    <location>
        <begin position="326"/>
        <end position="330"/>
    </location>
</feature>
<feature type="compositionally biased region" description="Low complexity" evidence="2">
    <location>
        <begin position="57"/>
        <end position="77"/>
    </location>
</feature>
<feature type="compositionally biased region" description="Polar residues" evidence="2">
    <location>
        <begin position="325"/>
        <end position="334"/>
    </location>
</feature>
<feature type="mutagenesis site" description="Localizes in nucleus and cytoplasm. Localizes mainly in cytoplasm; when associated with 145-A--A-150." evidence="13">
    <original>RRTR</original>
    <variation>AATA</variation>
    <location>
        <begin position="70"/>
        <end position="73"/>
    </location>
</feature>
<feature type="mutagenesis site" description="Localizes in nucleus and cytoplasm. Localizes mainly in cytoplasm; when associated with 70-A--A-73." evidence="13">
    <original>RRRRRR</original>
    <variation>AAAAAA</variation>
    <location>
        <begin position="145"/>
        <end position="150"/>
    </location>
</feature>
<feature type="sequence conflict" description="In Ref. 2; BAE27401." evidence="18" ref="2">
    <original>P</original>
    <variation>G</variation>
    <location>
        <position position="107"/>
    </location>
</feature>
<feature type="sequence conflict" description="In Ref. 2; BAE27401." evidence="18" ref="2">
    <original>R</original>
    <variation>W</variation>
    <location>
        <position position="215"/>
    </location>
</feature>
<feature type="sequence conflict" description="In Ref. 2; BAE27401." evidence="18" ref="2">
    <original>R</original>
    <variation>C</variation>
    <location>
        <position position="286"/>
    </location>
</feature>